<feature type="chain" id="PRO_0000057933" description="Putative 6-carboxy-5,6,7,8-tetrahydropterin synthase">
    <location>
        <begin position="1"/>
        <end position="157"/>
    </location>
</feature>
<feature type="active site" description="Proton acceptor" evidence="1">
    <location>
        <position position="31"/>
    </location>
</feature>
<feature type="active site" description="Charge relay system" evidence="1">
    <location>
        <position position="70"/>
    </location>
</feature>
<feature type="active site" description="Charge relay system" evidence="1">
    <location>
        <position position="140"/>
    </location>
</feature>
<feature type="binding site" evidence="1">
    <location>
        <position position="21"/>
    </location>
    <ligand>
        <name>Zn(2+)</name>
        <dbReference type="ChEBI" id="CHEBI:29105"/>
    </ligand>
</feature>
<feature type="binding site" evidence="1">
    <location>
        <position position="35"/>
    </location>
    <ligand>
        <name>Zn(2+)</name>
        <dbReference type="ChEBI" id="CHEBI:29105"/>
    </ligand>
</feature>
<feature type="binding site" evidence="1">
    <location>
        <position position="37"/>
    </location>
    <ligand>
        <name>Zn(2+)</name>
        <dbReference type="ChEBI" id="CHEBI:29105"/>
    </ligand>
</feature>
<accession>Q9UXZ4</accession>
<accession>G8ZK78</accession>
<comment type="function">
    <text evidence="1">Catalyzes the conversion of 7,8-dihydroneopterin triphosphate (H2NTP) to 6-carboxy-5,6,7,8-tetrahydropterin (CPH4) and acetaldehyde.</text>
</comment>
<comment type="catalytic activity">
    <reaction>
        <text>7,8-dihydroneopterin 3'-triphosphate + H2O = 6-carboxy-5,6,7,8-tetrahydropterin + triphosphate + acetaldehyde + 2 H(+)</text>
        <dbReference type="Rhea" id="RHEA:27966"/>
        <dbReference type="ChEBI" id="CHEBI:15343"/>
        <dbReference type="ChEBI" id="CHEBI:15377"/>
        <dbReference type="ChEBI" id="CHEBI:15378"/>
        <dbReference type="ChEBI" id="CHEBI:18036"/>
        <dbReference type="ChEBI" id="CHEBI:58462"/>
        <dbReference type="ChEBI" id="CHEBI:61032"/>
        <dbReference type="EC" id="4.1.2.50"/>
    </reaction>
</comment>
<comment type="cofactor">
    <cofactor evidence="1">
        <name>Zn(2+)</name>
        <dbReference type="ChEBI" id="CHEBI:29105"/>
    </cofactor>
    <text evidence="1">Binds 1 zinc ion per subunit.</text>
</comment>
<comment type="pathway">
    <text>Purine metabolism; 7-cyano-7-deazaguanine biosynthesis.</text>
</comment>
<comment type="miscellaneous">
    <text evidence="1">The active site is at the interface between 2 subunits. The proton acceptor Cys is on one subunit, and the charge relay system is on the other subunit (By similarity).</text>
</comment>
<comment type="similarity">
    <text evidence="2">Belongs to the PTPS family. QueD subfamily.</text>
</comment>
<name>QUED_PYRAB</name>
<evidence type="ECO:0000250" key="1"/>
<evidence type="ECO:0000305" key="2"/>
<reference key="1">
    <citation type="journal article" date="2003" name="Mol. Microbiol.">
        <title>An integrated analysis of the genome of the hyperthermophilic archaeon Pyrococcus abyssi.</title>
        <authorList>
            <person name="Cohen G.N."/>
            <person name="Barbe V."/>
            <person name="Flament D."/>
            <person name="Galperin M."/>
            <person name="Heilig R."/>
            <person name="Lecompte O."/>
            <person name="Poch O."/>
            <person name="Prieur D."/>
            <person name="Querellou J."/>
            <person name="Ripp R."/>
            <person name="Thierry J.-C."/>
            <person name="Van der Oost J."/>
            <person name="Weissenbach J."/>
            <person name="Zivanovic Y."/>
            <person name="Forterre P."/>
        </authorList>
    </citation>
    <scope>NUCLEOTIDE SEQUENCE [LARGE SCALE GENOMIC DNA]</scope>
    <source>
        <strain>GE5 / Orsay</strain>
    </source>
</reference>
<reference key="2">
    <citation type="journal article" date="2012" name="Curr. Microbiol.">
        <title>Re-annotation of two hyperthermophilic archaea Pyrococcus abyssi GE5 and Pyrococcus furiosus DSM 3638.</title>
        <authorList>
            <person name="Gao J."/>
            <person name="Wang J."/>
        </authorList>
    </citation>
    <scope>GENOME REANNOTATION</scope>
    <source>
        <strain>GE5 / Orsay</strain>
    </source>
</reference>
<dbReference type="EC" id="4.1.2.50"/>
<dbReference type="EMBL" id="AJ248288">
    <property type="protein sequence ID" value="CAB50618.1"/>
    <property type="molecule type" value="Genomic_DNA"/>
</dbReference>
<dbReference type="EMBL" id="HE613800">
    <property type="protein sequence ID" value="CCE71185.1"/>
    <property type="molecule type" value="Genomic_DNA"/>
</dbReference>
<dbReference type="PIR" id="D75022">
    <property type="entry name" value="D75022"/>
</dbReference>
<dbReference type="RefSeq" id="WP_010868831.1">
    <property type="nucleotide sequence ID" value="NC_000868.1"/>
</dbReference>
<dbReference type="SMR" id="Q9UXZ4"/>
<dbReference type="STRING" id="272844.PAB1123"/>
<dbReference type="KEGG" id="pab:PAB1123"/>
<dbReference type="PATRIC" id="fig|272844.11.peg.1830"/>
<dbReference type="eggNOG" id="arCOG02172">
    <property type="taxonomic scope" value="Archaea"/>
</dbReference>
<dbReference type="HOGENOM" id="CLU_111016_3_0_2"/>
<dbReference type="OrthoDB" id="6529at2157"/>
<dbReference type="PhylomeDB" id="Q9UXZ4"/>
<dbReference type="UniPathway" id="UPA00391"/>
<dbReference type="Proteomes" id="UP000000810">
    <property type="component" value="Chromosome"/>
</dbReference>
<dbReference type="Proteomes" id="UP000009139">
    <property type="component" value="Chromosome"/>
</dbReference>
<dbReference type="GO" id="GO:0070497">
    <property type="term" value="F:6-carboxytetrahydropterin synthase activity"/>
    <property type="evidence" value="ECO:0007669"/>
    <property type="project" value="UniProtKB-EC"/>
</dbReference>
<dbReference type="GO" id="GO:0046872">
    <property type="term" value="F:metal ion binding"/>
    <property type="evidence" value="ECO:0007669"/>
    <property type="project" value="UniProtKB-KW"/>
</dbReference>
<dbReference type="Gene3D" id="3.30.479.10">
    <property type="entry name" value="6-pyruvoyl tetrahydropterin synthase/QueD"/>
    <property type="match status" value="1"/>
</dbReference>
<dbReference type="InterPro" id="IPR007115">
    <property type="entry name" value="6-PTP_synth/QueD"/>
</dbReference>
<dbReference type="InterPro" id="IPR038418">
    <property type="entry name" value="6-PTP_synth/QueD_sf"/>
</dbReference>
<dbReference type="PANTHER" id="PTHR12589:SF7">
    <property type="entry name" value="6-PYRUVOYL TETRAHYDROBIOPTERIN SYNTHASE"/>
    <property type="match status" value="1"/>
</dbReference>
<dbReference type="PANTHER" id="PTHR12589">
    <property type="entry name" value="PYRUVOYL TETRAHYDROBIOPTERIN SYNTHASE"/>
    <property type="match status" value="1"/>
</dbReference>
<dbReference type="Pfam" id="PF01242">
    <property type="entry name" value="PTPS"/>
    <property type="match status" value="1"/>
</dbReference>
<dbReference type="SUPFAM" id="SSF55620">
    <property type="entry name" value="Tetrahydrobiopterin biosynthesis enzymes-like"/>
    <property type="match status" value="1"/>
</dbReference>
<organism>
    <name type="scientific">Pyrococcus abyssi (strain GE5 / Orsay)</name>
    <dbReference type="NCBI Taxonomy" id="272844"/>
    <lineage>
        <taxon>Archaea</taxon>
        <taxon>Methanobacteriati</taxon>
        <taxon>Methanobacteriota</taxon>
        <taxon>Thermococci</taxon>
        <taxon>Thermococcales</taxon>
        <taxon>Thermococcaceae</taxon>
        <taxon>Pyrococcus</taxon>
    </lineage>
</organism>
<proteinExistence type="inferred from homology"/>
<gene>
    <name type="primary">queD</name>
    <name type="ordered locus">PYRAB17130</name>
    <name type="ORF">PAB1123</name>
</gene>
<sequence>MKRVVSIKRRIYWTKEFDSSHFLELEYESKCRRLHGHTYRVEVEIEGEPNEHGMIFDFNHLSELIKTLDHKVIVSEKWVRYEEGYVLIEKNDKLLKLPRSEVVVIDKPNVTAEYIAEWISERILENAGENVREIRVRVWEDPRSYAEITLTLKPQGS</sequence>
<protein>
    <recommendedName>
        <fullName>Putative 6-carboxy-5,6,7,8-tetrahydropterin synthase</fullName>
        <shortName>CPH4 synthase</shortName>
        <ecNumber>4.1.2.50</ecNumber>
    </recommendedName>
    <alternativeName>
        <fullName>Archaeosine biosynthesis protein QueD</fullName>
    </alternativeName>
</protein>
<keyword id="KW-0456">Lyase</keyword>
<keyword id="KW-0479">Metal-binding</keyword>
<keyword id="KW-0862">Zinc</keyword>